<keyword id="KW-0963">Cytoplasm</keyword>
<keyword id="KW-0274">FAD</keyword>
<keyword id="KW-0285">Flavoprotein</keyword>
<keyword id="KW-0489">Methyltransferase</keyword>
<keyword id="KW-0511">Multifunctional enzyme</keyword>
<keyword id="KW-0560">Oxidoreductase</keyword>
<keyword id="KW-1185">Reference proteome</keyword>
<keyword id="KW-0949">S-adenosyl-L-methionine</keyword>
<keyword id="KW-0808">Transferase</keyword>
<keyword id="KW-0819">tRNA processing</keyword>
<comment type="function">
    <text evidence="1">Catalyzes the last two steps in the biosynthesis of 5-methylaminomethyl-2-thiouridine (mnm(5)s(2)U) at the wobble position (U34) in tRNA. Catalyzes the FAD-dependent demodification of cmnm(5)s(2)U34 to nm(5)s(2)U34, followed by the transfer of a methyl group from S-adenosyl-L-methionine to nm(5)s(2)U34, to form mnm(5)s(2)U34.</text>
</comment>
<comment type="catalytic activity">
    <reaction evidence="1">
        <text>5-aminomethyl-2-thiouridine(34) in tRNA + S-adenosyl-L-methionine = 5-methylaminomethyl-2-thiouridine(34) in tRNA + S-adenosyl-L-homocysteine + H(+)</text>
        <dbReference type="Rhea" id="RHEA:19569"/>
        <dbReference type="Rhea" id="RHEA-COMP:10195"/>
        <dbReference type="Rhea" id="RHEA-COMP:10197"/>
        <dbReference type="ChEBI" id="CHEBI:15378"/>
        <dbReference type="ChEBI" id="CHEBI:57856"/>
        <dbReference type="ChEBI" id="CHEBI:59789"/>
        <dbReference type="ChEBI" id="CHEBI:74454"/>
        <dbReference type="ChEBI" id="CHEBI:74455"/>
        <dbReference type="EC" id="2.1.1.61"/>
    </reaction>
</comment>
<comment type="cofactor">
    <cofactor evidence="1">
        <name>FAD</name>
        <dbReference type="ChEBI" id="CHEBI:57692"/>
    </cofactor>
</comment>
<comment type="subcellular location">
    <subcellularLocation>
        <location evidence="1">Cytoplasm</location>
    </subcellularLocation>
</comment>
<comment type="similarity">
    <text evidence="1">In the N-terminal section; belongs to the methyltransferase superfamily. tRNA (mnm(5)s(2)U34)-methyltransferase family.</text>
</comment>
<comment type="similarity">
    <text evidence="1">In the C-terminal section; belongs to the DAO family.</text>
</comment>
<accession>Q1QZP3</accession>
<dbReference type="EC" id="2.1.1.61" evidence="1"/>
<dbReference type="EC" id="1.5.-.-" evidence="1"/>
<dbReference type="EMBL" id="CP000285">
    <property type="protein sequence ID" value="ABE58065.1"/>
    <property type="molecule type" value="Genomic_DNA"/>
</dbReference>
<dbReference type="RefSeq" id="WP_011506011.1">
    <property type="nucleotide sequence ID" value="NC_007963.1"/>
</dbReference>
<dbReference type="SMR" id="Q1QZP3"/>
<dbReference type="STRING" id="290398.Csal_0704"/>
<dbReference type="GeneID" id="95333462"/>
<dbReference type="KEGG" id="csa:Csal_0704"/>
<dbReference type="eggNOG" id="COG0665">
    <property type="taxonomic scope" value="Bacteria"/>
</dbReference>
<dbReference type="eggNOG" id="COG4121">
    <property type="taxonomic scope" value="Bacteria"/>
</dbReference>
<dbReference type="HOGENOM" id="CLU_022427_1_0_6"/>
<dbReference type="OrthoDB" id="9786494at2"/>
<dbReference type="Proteomes" id="UP000000239">
    <property type="component" value="Chromosome"/>
</dbReference>
<dbReference type="GO" id="GO:0005737">
    <property type="term" value="C:cytoplasm"/>
    <property type="evidence" value="ECO:0007669"/>
    <property type="project" value="UniProtKB-SubCell"/>
</dbReference>
<dbReference type="GO" id="GO:0050660">
    <property type="term" value="F:flavin adenine dinucleotide binding"/>
    <property type="evidence" value="ECO:0007669"/>
    <property type="project" value="UniProtKB-UniRule"/>
</dbReference>
<dbReference type="GO" id="GO:0016645">
    <property type="term" value="F:oxidoreductase activity, acting on the CH-NH group of donors"/>
    <property type="evidence" value="ECO:0007669"/>
    <property type="project" value="InterPro"/>
</dbReference>
<dbReference type="GO" id="GO:0004808">
    <property type="term" value="F:tRNA (5-methylaminomethyl-2-thiouridylate)(34)-methyltransferase activity"/>
    <property type="evidence" value="ECO:0007669"/>
    <property type="project" value="UniProtKB-EC"/>
</dbReference>
<dbReference type="GO" id="GO:0032259">
    <property type="term" value="P:methylation"/>
    <property type="evidence" value="ECO:0007669"/>
    <property type="project" value="UniProtKB-KW"/>
</dbReference>
<dbReference type="GO" id="GO:0002097">
    <property type="term" value="P:tRNA wobble base modification"/>
    <property type="evidence" value="ECO:0007669"/>
    <property type="project" value="UniProtKB-UniRule"/>
</dbReference>
<dbReference type="Gene3D" id="3.30.9.10">
    <property type="entry name" value="D-Amino Acid Oxidase, subunit A, domain 2"/>
    <property type="match status" value="1"/>
</dbReference>
<dbReference type="Gene3D" id="3.50.50.60">
    <property type="entry name" value="FAD/NAD(P)-binding domain"/>
    <property type="match status" value="1"/>
</dbReference>
<dbReference type="Gene3D" id="3.40.50.150">
    <property type="entry name" value="Vaccinia Virus protein VP39"/>
    <property type="match status" value="1"/>
</dbReference>
<dbReference type="HAMAP" id="MF_01102">
    <property type="entry name" value="MnmC"/>
    <property type="match status" value="1"/>
</dbReference>
<dbReference type="InterPro" id="IPR006076">
    <property type="entry name" value="FAD-dep_OxRdtase"/>
</dbReference>
<dbReference type="InterPro" id="IPR036188">
    <property type="entry name" value="FAD/NAD-bd_sf"/>
</dbReference>
<dbReference type="InterPro" id="IPR008471">
    <property type="entry name" value="MnmC-like_methylTransf"/>
</dbReference>
<dbReference type="InterPro" id="IPR029063">
    <property type="entry name" value="SAM-dependent_MTases_sf"/>
</dbReference>
<dbReference type="InterPro" id="IPR023032">
    <property type="entry name" value="tRNA_MAMT_biosynth_bifunc_MnmC"/>
</dbReference>
<dbReference type="InterPro" id="IPR047785">
    <property type="entry name" value="tRNA_MNMC2"/>
</dbReference>
<dbReference type="InterPro" id="IPR017610">
    <property type="entry name" value="tRNA_S-uridine_synth_MnmC_C"/>
</dbReference>
<dbReference type="NCBIfam" id="TIGR03197">
    <property type="entry name" value="MnmC_Cterm"/>
    <property type="match status" value="1"/>
</dbReference>
<dbReference type="NCBIfam" id="NF002481">
    <property type="entry name" value="PRK01747.1-2"/>
    <property type="match status" value="1"/>
</dbReference>
<dbReference type="NCBIfam" id="NF033855">
    <property type="entry name" value="tRNA_MNMC2"/>
    <property type="match status" value="1"/>
</dbReference>
<dbReference type="PANTHER" id="PTHR13847">
    <property type="entry name" value="SARCOSINE DEHYDROGENASE-RELATED"/>
    <property type="match status" value="1"/>
</dbReference>
<dbReference type="PANTHER" id="PTHR13847:SF283">
    <property type="entry name" value="TRNA 5-METHYLAMINOMETHYL-2-THIOURIDINE BIOSYNTHESIS BIFUNCTIONAL PROTEIN MNMC"/>
    <property type="match status" value="1"/>
</dbReference>
<dbReference type="Pfam" id="PF01266">
    <property type="entry name" value="DAO"/>
    <property type="match status" value="1"/>
</dbReference>
<dbReference type="Pfam" id="PF05430">
    <property type="entry name" value="Methyltransf_30"/>
    <property type="match status" value="1"/>
</dbReference>
<dbReference type="SUPFAM" id="SSF51905">
    <property type="entry name" value="FAD/NAD(P)-binding domain"/>
    <property type="match status" value="1"/>
</dbReference>
<dbReference type="SUPFAM" id="SSF53335">
    <property type="entry name" value="S-adenosyl-L-methionine-dependent methyltransferases"/>
    <property type="match status" value="1"/>
</dbReference>
<proteinExistence type="inferred from homology"/>
<name>MNMC_CHRSD</name>
<gene>
    <name evidence="1" type="primary">mnmC</name>
    <name type="ordered locus">Csal_0704</name>
</gene>
<evidence type="ECO:0000255" key="1">
    <source>
        <dbReference type="HAMAP-Rule" id="MF_01102"/>
    </source>
</evidence>
<evidence type="ECO:0000256" key="2">
    <source>
        <dbReference type="SAM" id="MobiDB-lite"/>
    </source>
</evidence>
<feature type="chain" id="PRO_0000347975" description="tRNA 5-methylaminomethyl-2-thiouridine biosynthesis bifunctional protein MnmC">
    <location>
        <begin position="1"/>
        <end position="699"/>
    </location>
</feature>
<feature type="region of interest" description="tRNA (mnm(5)s(2)U34)-methyltransferase">
    <location>
        <begin position="1"/>
        <end position="247"/>
    </location>
</feature>
<feature type="region of interest" description="FAD-dependent cmnm(5)s(2)U34 oxidoreductase">
    <location>
        <begin position="275"/>
        <end position="699"/>
    </location>
</feature>
<feature type="region of interest" description="Disordered" evidence="2">
    <location>
        <begin position="675"/>
        <end position="699"/>
    </location>
</feature>
<protein>
    <recommendedName>
        <fullName evidence="1">tRNA 5-methylaminomethyl-2-thiouridine biosynthesis bifunctional protein MnmC</fullName>
        <shortName evidence="1">tRNA mnm(5)s(2)U biosynthesis bifunctional protein</shortName>
    </recommendedName>
    <domain>
        <recommendedName>
            <fullName evidence="1">tRNA (mnm(5)s(2)U34)-methyltransferase</fullName>
            <ecNumber evidence="1">2.1.1.61</ecNumber>
        </recommendedName>
    </domain>
    <domain>
        <recommendedName>
            <fullName evidence="1">FAD-dependent cmnm(5)s(2)U34 oxidoreductase</fullName>
            <ecNumber evidence="1">1.5.-.-</ecNumber>
        </recommendedName>
    </domain>
</protein>
<reference key="1">
    <citation type="journal article" date="2011" name="Stand. Genomic Sci.">
        <title>Complete genome sequence of the halophilic and highly halotolerant Chromohalobacter salexigens type strain (1H11(T)).</title>
        <authorList>
            <person name="Copeland A."/>
            <person name="O'Connor K."/>
            <person name="Lucas S."/>
            <person name="Lapidus A."/>
            <person name="Berry K.W."/>
            <person name="Detter J.C."/>
            <person name="Del Rio T.G."/>
            <person name="Hammon N."/>
            <person name="Dalin E."/>
            <person name="Tice H."/>
            <person name="Pitluck S."/>
            <person name="Bruce D."/>
            <person name="Goodwin L."/>
            <person name="Han C."/>
            <person name="Tapia R."/>
            <person name="Saunders E."/>
            <person name="Schmutz J."/>
            <person name="Brettin T."/>
            <person name="Larimer F."/>
            <person name="Land M."/>
            <person name="Hauser L."/>
            <person name="Vargas C."/>
            <person name="Nieto J.J."/>
            <person name="Kyrpides N.C."/>
            <person name="Ivanova N."/>
            <person name="Goker M."/>
            <person name="Klenk H.P."/>
            <person name="Csonka L.N."/>
            <person name="Woyke T."/>
        </authorList>
    </citation>
    <scope>NUCLEOTIDE SEQUENCE [LARGE SCALE GENOMIC DNA]</scope>
    <source>
        <strain>ATCC BAA-138 / DSM 3043 / CIP 106854 / NCIMB 13768 / 1H11</strain>
    </source>
</reference>
<organism>
    <name type="scientific">Chromohalobacter salexigens (strain ATCC BAA-138 / DSM 3043 / CIP 106854 / NCIMB 13768 / 1H11)</name>
    <dbReference type="NCBI Taxonomy" id="290398"/>
    <lineage>
        <taxon>Bacteria</taxon>
        <taxon>Pseudomonadati</taxon>
        <taxon>Pseudomonadota</taxon>
        <taxon>Gammaproteobacteria</taxon>
        <taxon>Oceanospirillales</taxon>
        <taxon>Halomonadaceae</taxon>
        <taxon>Chromohalobacter</taxon>
    </lineage>
</organism>
<sequence>MPAVSRPLPPLTALAPPELEWRADDISDAPYASAYGDVYFSRHDGRAETGHVFVEGNRLPERFAAWRETRAFVIGETGFGTGLNMLCAWACFERHAPAEARLHLVSTEKYPLPRDALARALAIWPDMAARAGVLLDQWPEPVGGVHRLWLSSRVVLDLHFGDAAERLSRLDGRVDAWFLDGFSPAKNPDMWQPELFAAMAQVSRPGATFATFTCAGVVKRGLRDAGFTWRKTPGFGRKREMLCGEIAAPPDDRRRASTPWFTPPRARPARHVVVIGAGLAGTSVAAALARRGVAVTLLERDAPGAGASGNRQGALYVKLAAETNPQSRVYLAGLLYTRRWLTALDPEQRLWQDCGVLQLAPGDKEATRQQRFLAHHALPERVLHGVDAATASQAAGTPLDAPGLDYPQAGWVRPDRLCQQLAASPGITQRRGEAHDLDFDADADAWRIALTDGSTLTADHVVVATAHEAPRFTPLAGLPLKPIRGQLTHVPVPADAPSLARVVCAGGYVAPAMEGVLSLGATFAPGDTDTAVRTTDHARNLDEFTATLPAFAEALRAAGVTLDPAACEGRASLRAASPDKSPYAGPVPVREAWLDDYAVLGADARRVPSTAGRHHPGLWVSAAHGSRGLASAPLCAEVIASRLCDEPLPLERELIDHLHPGRRLIADIIRGNATRGNATLSTSSPNDDAQPSPTTTETP</sequence>